<proteinExistence type="evidence at protein level"/>
<dbReference type="EC" id="3.2.1.8"/>
<dbReference type="UniPathway" id="UPA00114"/>
<dbReference type="GO" id="GO:0031176">
    <property type="term" value="F:endo-1,4-beta-xylanase activity"/>
    <property type="evidence" value="ECO:0007669"/>
    <property type="project" value="UniProtKB-EC"/>
</dbReference>
<dbReference type="GO" id="GO:0045493">
    <property type="term" value="P:xylan catabolic process"/>
    <property type="evidence" value="ECO:0007669"/>
    <property type="project" value="UniProtKB-UniPathway"/>
</dbReference>
<feature type="chain" id="PRO_0000184063" description="Endo-1,4-beta-xylanase A">
    <location>
        <begin position="1"/>
        <end position="21" status="greater than"/>
    </location>
</feature>
<feature type="non-terminal residue">
    <location>
        <position position="21"/>
    </location>
</feature>
<name>XYNA_DICB4</name>
<comment type="catalytic activity">
    <reaction>
        <text>Endohydrolysis of (1-&gt;4)-beta-D-xylosidic linkages in xylans.</text>
        <dbReference type="EC" id="3.2.1.8"/>
    </reaction>
</comment>
<comment type="pathway">
    <text>Glycan degradation; xylan degradation.</text>
</comment>
<comment type="similarity">
    <text evidence="1">Belongs to the glycosyl hydrolase 10 (cellulase F) family.</text>
</comment>
<reference key="1">
    <citation type="submission" date="1996-10" db="UniProtKB">
        <authorList>
            <person name="Adamsen A.K."/>
            <person name="Jacobsen S."/>
            <person name="Ahring B.K."/>
        </authorList>
    </citation>
    <scope>PROTEIN SEQUENCE</scope>
</reference>
<accession>P80718</accession>
<keyword id="KW-0119">Carbohydrate metabolism</keyword>
<keyword id="KW-0903">Direct protein sequencing</keyword>
<keyword id="KW-0326">Glycosidase</keyword>
<keyword id="KW-0378">Hydrolase</keyword>
<keyword id="KW-0624">Polysaccharide degradation</keyword>
<keyword id="KW-0858">Xylan degradation</keyword>
<evidence type="ECO:0000305" key="1"/>
<sequence>MLNERFSILVLLLILLTFSLG</sequence>
<organism>
    <name type="scientific">Dictyoglomus sp. (strain B4A)</name>
    <dbReference type="NCBI Taxonomy" id="69007"/>
    <lineage>
        <taxon>Bacteria</taxon>
        <taxon>Pseudomonadati</taxon>
        <taxon>Dictyoglomota</taxon>
        <taxon>Dictyoglomia</taxon>
        <taxon>Dictyoglomales</taxon>
        <taxon>Dictyoglomaceae</taxon>
        <taxon>Dictyoglomus</taxon>
    </lineage>
</organism>
<protein>
    <recommendedName>
        <fullName>Endo-1,4-beta-xylanase A</fullName>
        <shortName>Xylanase A</shortName>
        <ecNumber>3.2.1.8</ecNumber>
    </recommendedName>
    <alternativeName>
        <fullName>1,4-beta-D-xylan xylanohydrolase A</fullName>
    </alternativeName>
</protein>